<evidence type="ECO:0000255" key="1">
    <source>
        <dbReference type="HAMAP-Rule" id="MF_00440"/>
    </source>
</evidence>
<accession>Q3II24</accession>
<gene>
    <name evidence="1" type="primary">nrdR</name>
    <name type="ordered locus">PSHAa2375</name>
</gene>
<reference key="1">
    <citation type="journal article" date="2005" name="Genome Res.">
        <title>Coping with cold: the genome of the versatile marine Antarctica bacterium Pseudoalteromonas haloplanktis TAC125.</title>
        <authorList>
            <person name="Medigue C."/>
            <person name="Krin E."/>
            <person name="Pascal G."/>
            <person name="Barbe V."/>
            <person name="Bernsel A."/>
            <person name="Bertin P.N."/>
            <person name="Cheung F."/>
            <person name="Cruveiller S."/>
            <person name="D'Amico S."/>
            <person name="Duilio A."/>
            <person name="Fang G."/>
            <person name="Feller G."/>
            <person name="Ho C."/>
            <person name="Mangenot S."/>
            <person name="Marino G."/>
            <person name="Nilsson J."/>
            <person name="Parrilli E."/>
            <person name="Rocha E.P.C."/>
            <person name="Rouy Z."/>
            <person name="Sekowska A."/>
            <person name="Tutino M.L."/>
            <person name="Vallenet D."/>
            <person name="von Heijne G."/>
            <person name="Danchin A."/>
        </authorList>
    </citation>
    <scope>NUCLEOTIDE SEQUENCE [LARGE SCALE GENOMIC DNA]</scope>
    <source>
        <strain>TAC 125</strain>
    </source>
</reference>
<organism>
    <name type="scientific">Pseudoalteromonas translucida (strain TAC 125)</name>
    <dbReference type="NCBI Taxonomy" id="326442"/>
    <lineage>
        <taxon>Bacteria</taxon>
        <taxon>Pseudomonadati</taxon>
        <taxon>Pseudomonadota</taxon>
        <taxon>Gammaproteobacteria</taxon>
        <taxon>Alteromonadales</taxon>
        <taxon>Pseudoalteromonadaceae</taxon>
        <taxon>Pseudoalteromonas</taxon>
    </lineage>
</organism>
<protein>
    <recommendedName>
        <fullName evidence="1">Transcriptional repressor NrdR</fullName>
    </recommendedName>
</protein>
<name>NRDR_PSET1</name>
<proteinExistence type="inferred from homology"/>
<dbReference type="EMBL" id="CR954246">
    <property type="protein sequence ID" value="CAI87424.1"/>
    <property type="molecule type" value="Genomic_DNA"/>
</dbReference>
<dbReference type="SMR" id="Q3II24"/>
<dbReference type="STRING" id="326442.PSHAa2375"/>
<dbReference type="KEGG" id="pha:PSHAa2375"/>
<dbReference type="PATRIC" id="fig|326442.8.peg.2288"/>
<dbReference type="eggNOG" id="COG1327">
    <property type="taxonomic scope" value="Bacteria"/>
</dbReference>
<dbReference type="HOGENOM" id="CLU_108412_0_0_6"/>
<dbReference type="BioCyc" id="PHAL326442:PSHA_RS11700-MONOMER"/>
<dbReference type="Proteomes" id="UP000006843">
    <property type="component" value="Chromosome I"/>
</dbReference>
<dbReference type="GO" id="GO:0005524">
    <property type="term" value="F:ATP binding"/>
    <property type="evidence" value="ECO:0007669"/>
    <property type="project" value="UniProtKB-KW"/>
</dbReference>
<dbReference type="GO" id="GO:0003677">
    <property type="term" value="F:DNA binding"/>
    <property type="evidence" value="ECO:0007669"/>
    <property type="project" value="UniProtKB-KW"/>
</dbReference>
<dbReference type="GO" id="GO:0008270">
    <property type="term" value="F:zinc ion binding"/>
    <property type="evidence" value="ECO:0007669"/>
    <property type="project" value="UniProtKB-UniRule"/>
</dbReference>
<dbReference type="GO" id="GO:0045892">
    <property type="term" value="P:negative regulation of DNA-templated transcription"/>
    <property type="evidence" value="ECO:0007669"/>
    <property type="project" value="UniProtKB-UniRule"/>
</dbReference>
<dbReference type="HAMAP" id="MF_00440">
    <property type="entry name" value="NrdR"/>
    <property type="match status" value="1"/>
</dbReference>
<dbReference type="InterPro" id="IPR005144">
    <property type="entry name" value="ATP-cone_dom"/>
</dbReference>
<dbReference type="InterPro" id="IPR055173">
    <property type="entry name" value="NrdR-like_N"/>
</dbReference>
<dbReference type="InterPro" id="IPR003796">
    <property type="entry name" value="RNR_NrdR-like"/>
</dbReference>
<dbReference type="NCBIfam" id="TIGR00244">
    <property type="entry name" value="transcriptional regulator NrdR"/>
    <property type="match status" value="1"/>
</dbReference>
<dbReference type="PANTHER" id="PTHR30455">
    <property type="entry name" value="TRANSCRIPTIONAL REPRESSOR NRDR"/>
    <property type="match status" value="1"/>
</dbReference>
<dbReference type="PANTHER" id="PTHR30455:SF2">
    <property type="entry name" value="TRANSCRIPTIONAL REPRESSOR NRDR"/>
    <property type="match status" value="1"/>
</dbReference>
<dbReference type="Pfam" id="PF03477">
    <property type="entry name" value="ATP-cone"/>
    <property type="match status" value="1"/>
</dbReference>
<dbReference type="Pfam" id="PF22811">
    <property type="entry name" value="Zn_ribbon_NrdR"/>
    <property type="match status" value="1"/>
</dbReference>
<dbReference type="PROSITE" id="PS51161">
    <property type="entry name" value="ATP_CONE"/>
    <property type="match status" value="1"/>
</dbReference>
<feature type="chain" id="PRO_0000230880" description="Transcriptional repressor NrdR">
    <location>
        <begin position="1"/>
        <end position="149"/>
    </location>
</feature>
<feature type="domain" description="ATP-cone" evidence="1">
    <location>
        <begin position="49"/>
        <end position="139"/>
    </location>
</feature>
<feature type="zinc finger region" evidence="1">
    <location>
        <begin position="3"/>
        <end position="34"/>
    </location>
</feature>
<comment type="function">
    <text evidence="1">Negatively regulates transcription of bacterial ribonucleotide reductase nrd genes and operons by binding to NrdR-boxes.</text>
</comment>
<comment type="cofactor">
    <cofactor evidence="1">
        <name>Zn(2+)</name>
        <dbReference type="ChEBI" id="CHEBI:29105"/>
    </cofactor>
    <text evidence="1">Binds 1 zinc ion.</text>
</comment>
<comment type="similarity">
    <text evidence="1">Belongs to the NrdR family.</text>
</comment>
<sequence length="149" mass="17082">MHCPFCTAKDTKVIDSRLVGGGHQVRRRRECNDCHERFTTFEGAELVMPRVIKQDGSREPFNEDKLLNGLNRALEKRPVSTEQVEEVVNIIKSQLRATGEREVSSHLVGECIMEALKKLDKVAYVRFASVYRSFEDIREFGEEIARLGE</sequence>
<keyword id="KW-0067">ATP-binding</keyword>
<keyword id="KW-0238">DNA-binding</keyword>
<keyword id="KW-0479">Metal-binding</keyword>
<keyword id="KW-0547">Nucleotide-binding</keyword>
<keyword id="KW-1185">Reference proteome</keyword>
<keyword id="KW-0678">Repressor</keyword>
<keyword id="KW-0804">Transcription</keyword>
<keyword id="KW-0805">Transcription regulation</keyword>
<keyword id="KW-0862">Zinc</keyword>
<keyword id="KW-0863">Zinc-finger</keyword>